<reference key="1">
    <citation type="journal article" date="2002" name="Nature">
        <title>The genome sequence of Schizosaccharomyces pombe.</title>
        <authorList>
            <person name="Wood V."/>
            <person name="Gwilliam R."/>
            <person name="Rajandream M.A."/>
            <person name="Lyne M.H."/>
            <person name="Lyne R."/>
            <person name="Stewart A."/>
            <person name="Sgouros J.G."/>
            <person name="Peat N."/>
            <person name="Hayles J."/>
            <person name="Baker S.G."/>
            <person name="Basham D."/>
            <person name="Bowman S."/>
            <person name="Brooks K."/>
            <person name="Brown D."/>
            <person name="Brown S."/>
            <person name="Chillingworth T."/>
            <person name="Churcher C.M."/>
            <person name="Collins M."/>
            <person name="Connor R."/>
            <person name="Cronin A."/>
            <person name="Davis P."/>
            <person name="Feltwell T."/>
            <person name="Fraser A."/>
            <person name="Gentles S."/>
            <person name="Goble A."/>
            <person name="Hamlin N."/>
            <person name="Harris D.E."/>
            <person name="Hidalgo J."/>
            <person name="Hodgson G."/>
            <person name="Holroyd S."/>
            <person name="Hornsby T."/>
            <person name="Howarth S."/>
            <person name="Huckle E.J."/>
            <person name="Hunt S."/>
            <person name="Jagels K."/>
            <person name="James K.D."/>
            <person name="Jones L."/>
            <person name="Jones M."/>
            <person name="Leather S."/>
            <person name="McDonald S."/>
            <person name="McLean J."/>
            <person name="Mooney P."/>
            <person name="Moule S."/>
            <person name="Mungall K.L."/>
            <person name="Murphy L.D."/>
            <person name="Niblett D."/>
            <person name="Odell C."/>
            <person name="Oliver K."/>
            <person name="O'Neil S."/>
            <person name="Pearson D."/>
            <person name="Quail M.A."/>
            <person name="Rabbinowitsch E."/>
            <person name="Rutherford K.M."/>
            <person name="Rutter S."/>
            <person name="Saunders D."/>
            <person name="Seeger K."/>
            <person name="Sharp S."/>
            <person name="Skelton J."/>
            <person name="Simmonds M.N."/>
            <person name="Squares R."/>
            <person name="Squares S."/>
            <person name="Stevens K."/>
            <person name="Taylor K."/>
            <person name="Taylor R.G."/>
            <person name="Tivey A."/>
            <person name="Walsh S.V."/>
            <person name="Warren T."/>
            <person name="Whitehead S."/>
            <person name="Woodward J.R."/>
            <person name="Volckaert G."/>
            <person name="Aert R."/>
            <person name="Robben J."/>
            <person name="Grymonprez B."/>
            <person name="Weltjens I."/>
            <person name="Vanstreels E."/>
            <person name="Rieger M."/>
            <person name="Schaefer M."/>
            <person name="Mueller-Auer S."/>
            <person name="Gabel C."/>
            <person name="Fuchs M."/>
            <person name="Duesterhoeft A."/>
            <person name="Fritzc C."/>
            <person name="Holzer E."/>
            <person name="Moestl D."/>
            <person name="Hilbert H."/>
            <person name="Borzym K."/>
            <person name="Langer I."/>
            <person name="Beck A."/>
            <person name="Lehrach H."/>
            <person name="Reinhardt R."/>
            <person name="Pohl T.M."/>
            <person name="Eger P."/>
            <person name="Zimmermann W."/>
            <person name="Wedler H."/>
            <person name="Wambutt R."/>
            <person name="Purnelle B."/>
            <person name="Goffeau A."/>
            <person name="Cadieu E."/>
            <person name="Dreano S."/>
            <person name="Gloux S."/>
            <person name="Lelaure V."/>
            <person name="Mottier S."/>
            <person name="Galibert F."/>
            <person name="Aves S.J."/>
            <person name="Xiang Z."/>
            <person name="Hunt C."/>
            <person name="Moore K."/>
            <person name="Hurst S.M."/>
            <person name="Lucas M."/>
            <person name="Rochet M."/>
            <person name="Gaillardin C."/>
            <person name="Tallada V.A."/>
            <person name="Garzon A."/>
            <person name="Thode G."/>
            <person name="Daga R.R."/>
            <person name="Cruzado L."/>
            <person name="Jimenez J."/>
            <person name="Sanchez M."/>
            <person name="del Rey F."/>
            <person name="Benito J."/>
            <person name="Dominguez A."/>
            <person name="Revuelta J.L."/>
            <person name="Moreno S."/>
            <person name="Armstrong J."/>
            <person name="Forsburg S.L."/>
            <person name="Cerutti L."/>
            <person name="Lowe T."/>
            <person name="McCombie W.R."/>
            <person name="Paulsen I."/>
            <person name="Potashkin J."/>
            <person name="Shpakovski G.V."/>
            <person name="Ussery D."/>
            <person name="Barrell B.G."/>
            <person name="Nurse P."/>
        </authorList>
    </citation>
    <scope>NUCLEOTIDE SEQUENCE [LARGE SCALE GENOMIC DNA]</scope>
    <source>
        <strain>972 / ATCC 24843</strain>
    </source>
</reference>
<accession>Q9Y7P7</accession>
<sequence length="117" mass="13431">MRSNNSSLVHCCWVSPPSLTRLPAFPSPRILSPCYCYNKRIRPFRGLTSYRQASYSLGFPLGLLVFLHSLIVARFFVASKSRSCIVRSLLFWINLDSADSRISVLFQCFFCIDIWTV</sequence>
<organism>
    <name type="scientific">Schizosaccharomyces pombe (strain 972 / ATCC 24843)</name>
    <name type="common">Fission yeast</name>
    <dbReference type="NCBI Taxonomy" id="284812"/>
    <lineage>
        <taxon>Eukaryota</taxon>
        <taxon>Fungi</taxon>
        <taxon>Dikarya</taxon>
        <taxon>Ascomycota</taxon>
        <taxon>Taphrinomycotina</taxon>
        <taxon>Schizosaccharomycetes</taxon>
        <taxon>Schizosaccharomycetales</taxon>
        <taxon>Schizosaccharomycetaceae</taxon>
        <taxon>Schizosaccharomyces</taxon>
    </lineage>
</organism>
<feature type="chain" id="PRO_0000116883" description="Uncharacterized protein C191.03c">
    <location>
        <begin position="1"/>
        <end position="117"/>
    </location>
</feature>
<feature type="transmembrane region" description="Helical" evidence="1">
    <location>
        <begin position="57"/>
        <end position="77"/>
    </location>
</feature>
<gene>
    <name type="ORF">SPCC191.03c</name>
</gene>
<keyword id="KW-0472">Membrane</keyword>
<keyword id="KW-1185">Reference proteome</keyword>
<keyword id="KW-0812">Transmembrane</keyword>
<keyword id="KW-1133">Transmembrane helix</keyword>
<comment type="subcellular location">
    <subcellularLocation>
        <location evidence="2">Membrane</location>
        <topology evidence="2">Single-pass membrane protein</topology>
    </subcellularLocation>
</comment>
<dbReference type="EMBL" id="CU329672">
    <property type="protein sequence ID" value="CAB41049.1"/>
    <property type="molecule type" value="Genomic_DNA"/>
</dbReference>
<dbReference type="PIR" id="T41216">
    <property type="entry name" value="T41216"/>
</dbReference>
<dbReference type="RefSeq" id="NP_588292.1">
    <property type="nucleotide sequence ID" value="NM_001023282.2"/>
</dbReference>
<dbReference type="SMR" id="Q9Y7P7"/>
<dbReference type="PaxDb" id="4896-SPCC191.03c.1"/>
<dbReference type="EnsemblFungi" id="SPCC191.03c.1">
    <property type="protein sequence ID" value="SPCC191.03c.1:pep"/>
    <property type="gene ID" value="SPCC191.03c"/>
</dbReference>
<dbReference type="KEGG" id="spo:2539193"/>
<dbReference type="PomBase" id="SPCC191.03c"/>
<dbReference type="VEuPathDB" id="FungiDB:SPCC191.03c"/>
<dbReference type="HOGENOM" id="CLU_2086179_0_0_1"/>
<dbReference type="InParanoid" id="Q9Y7P7"/>
<dbReference type="PRO" id="PR:Q9Y7P7"/>
<dbReference type="Proteomes" id="UP000002485">
    <property type="component" value="Chromosome III"/>
</dbReference>
<dbReference type="GO" id="GO:0005829">
    <property type="term" value="C:cytosol"/>
    <property type="evidence" value="ECO:0007005"/>
    <property type="project" value="PomBase"/>
</dbReference>
<dbReference type="GO" id="GO:0016020">
    <property type="term" value="C:membrane"/>
    <property type="evidence" value="ECO:0007669"/>
    <property type="project" value="UniProtKB-SubCell"/>
</dbReference>
<dbReference type="GO" id="GO:0005634">
    <property type="term" value="C:nucleus"/>
    <property type="evidence" value="ECO:0007005"/>
    <property type="project" value="PomBase"/>
</dbReference>
<proteinExistence type="predicted"/>
<evidence type="ECO:0000255" key="1"/>
<evidence type="ECO:0000305" key="2"/>
<protein>
    <recommendedName>
        <fullName>Uncharacterized protein C191.03c</fullName>
    </recommendedName>
</protein>
<name>YQ63_SCHPO</name>